<reference key="1">
    <citation type="submission" date="2006-12" db="EMBL/GenBank/DDBJ databases">
        <title>Complete sequence of chromosome 1 of Nocardioides sp. JS614.</title>
        <authorList>
            <person name="Copeland A."/>
            <person name="Lucas S."/>
            <person name="Lapidus A."/>
            <person name="Barry K."/>
            <person name="Detter J.C."/>
            <person name="Glavina del Rio T."/>
            <person name="Hammon N."/>
            <person name="Israni S."/>
            <person name="Dalin E."/>
            <person name="Tice H."/>
            <person name="Pitluck S."/>
            <person name="Thompson L.S."/>
            <person name="Brettin T."/>
            <person name="Bruce D."/>
            <person name="Han C."/>
            <person name="Tapia R."/>
            <person name="Schmutz J."/>
            <person name="Larimer F."/>
            <person name="Land M."/>
            <person name="Hauser L."/>
            <person name="Kyrpides N."/>
            <person name="Kim E."/>
            <person name="Mattes T."/>
            <person name="Gossett J."/>
            <person name="Richardson P."/>
        </authorList>
    </citation>
    <scope>NUCLEOTIDE SEQUENCE [LARGE SCALE GENOMIC DNA]</scope>
    <source>
        <strain>ATCC BAA-499 / JS614</strain>
    </source>
</reference>
<protein>
    <recommendedName>
        <fullName evidence="1">Small ribosomal subunit protein uS8</fullName>
    </recommendedName>
    <alternativeName>
        <fullName evidence="2">30S ribosomal protein S8</fullName>
    </alternativeName>
</protein>
<name>RS8_NOCSJ</name>
<evidence type="ECO:0000255" key="1">
    <source>
        <dbReference type="HAMAP-Rule" id="MF_01302"/>
    </source>
</evidence>
<evidence type="ECO:0000305" key="2"/>
<feature type="chain" id="PRO_0000290890" description="Small ribosomal subunit protein uS8">
    <location>
        <begin position="1"/>
        <end position="135"/>
    </location>
</feature>
<proteinExistence type="inferred from homology"/>
<accession>A1SNK4</accession>
<organism>
    <name type="scientific">Nocardioides sp. (strain ATCC BAA-499 / JS614)</name>
    <dbReference type="NCBI Taxonomy" id="196162"/>
    <lineage>
        <taxon>Bacteria</taxon>
        <taxon>Bacillati</taxon>
        <taxon>Actinomycetota</taxon>
        <taxon>Actinomycetes</taxon>
        <taxon>Propionibacteriales</taxon>
        <taxon>Nocardioidaceae</taxon>
        <taxon>Nocardioides</taxon>
    </lineage>
</organism>
<keyword id="KW-1185">Reference proteome</keyword>
<keyword id="KW-0687">Ribonucleoprotein</keyword>
<keyword id="KW-0689">Ribosomal protein</keyword>
<keyword id="KW-0694">RNA-binding</keyword>
<keyword id="KW-0699">rRNA-binding</keyword>
<gene>
    <name evidence="1" type="primary">rpsH</name>
    <name type="ordered locus">Noca_3891</name>
</gene>
<comment type="function">
    <text evidence="1">One of the primary rRNA binding proteins, it binds directly to 16S rRNA central domain where it helps coordinate assembly of the platform of the 30S subunit.</text>
</comment>
<comment type="subunit">
    <text evidence="1">Part of the 30S ribosomal subunit. Contacts proteins S5 and S12.</text>
</comment>
<comment type="similarity">
    <text evidence="1">Belongs to the universal ribosomal protein uS8 family.</text>
</comment>
<sequence length="135" mass="14707">MTMTDPIADMLTRLRNANQAYHDAVSMPYSKLKQGVADILKQEGYITSYDVTEPAEGEVGKTLTITLKYGRNRERSIAGVRRISKPGLRVYAKHTGLPKVLGGLGVAIISTSQGLLTDRQANQKGVGGEVLAYVW</sequence>
<dbReference type="EMBL" id="CP000509">
    <property type="protein sequence ID" value="ABL83389.1"/>
    <property type="molecule type" value="Genomic_DNA"/>
</dbReference>
<dbReference type="RefSeq" id="WP_011757320.1">
    <property type="nucleotide sequence ID" value="NC_008699.1"/>
</dbReference>
<dbReference type="SMR" id="A1SNK4"/>
<dbReference type="STRING" id="196162.Noca_3891"/>
<dbReference type="KEGG" id="nca:Noca_3891"/>
<dbReference type="eggNOG" id="COG0096">
    <property type="taxonomic scope" value="Bacteria"/>
</dbReference>
<dbReference type="HOGENOM" id="CLU_098428_0_1_11"/>
<dbReference type="OrthoDB" id="9802617at2"/>
<dbReference type="Proteomes" id="UP000000640">
    <property type="component" value="Chromosome"/>
</dbReference>
<dbReference type="GO" id="GO:1990904">
    <property type="term" value="C:ribonucleoprotein complex"/>
    <property type="evidence" value="ECO:0007669"/>
    <property type="project" value="UniProtKB-KW"/>
</dbReference>
<dbReference type="GO" id="GO:0005840">
    <property type="term" value="C:ribosome"/>
    <property type="evidence" value="ECO:0007669"/>
    <property type="project" value="UniProtKB-KW"/>
</dbReference>
<dbReference type="GO" id="GO:0019843">
    <property type="term" value="F:rRNA binding"/>
    <property type="evidence" value="ECO:0007669"/>
    <property type="project" value="UniProtKB-UniRule"/>
</dbReference>
<dbReference type="GO" id="GO:0003735">
    <property type="term" value="F:structural constituent of ribosome"/>
    <property type="evidence" value="ECO:0007669"/>
    <property type="project" value="InterPro"/>
</dbReference>
<dbReference type="GO" id="GO:0006412">
    <property type="term" value="P:translation"/>
    <property type="evidence" value="ECO:0007669"/>
    <property type="project" value="UniProtKB-UniRule"/>
</dbReference>
<dbReference type="FunFam" id="3.30.1370.30:FF:000002">
    <property type="entry name" value="30S ribosomal protein S8"/>
    <property type="match status" value="1"/>
</dbReference>
<dbReference type="FunFam" id="3.30.1490.10:FF:000001">
    <property type="entry name" value="30S ribosomal protein S8"/>
    <property type="match status" value="1"/>
</dbReference>
<dbReference type="Gene3D" id="3.30.1370.30">
    <property type="match status" value="1"/>
</dbReference>
<dbReference type="Gene3D" id="3.30.1490.10">
    <property type="match status" value="1"/>
</dbReference>
<dbReference type="HAMAP" id="MF_01302_B">
    <property type="entry name" value="Ribosomal_uS8_B"/>
    <property type="match status" value="1"/>
</dbReference>
<dbReference type="InterPro" id="IPR000630">
    <property type="entry name" value="Ribosomal_uS8"/>
</dbReference>
<dbReference type="InterPro" id="IPR035987">
    <property type="entry name" value="Ribosomal_uS8_sf"/>
</dbReference>
<dbReference type="NCBIfam" id="NF001109">
    <property type="entry name" value="PRK00136.1"/>
    <property type="match status" value="1"/>
</dbReference>
<dbReference type="PANTHER" id="PTHR11758">
    <property type="entry name" value="40S RIBOSOMAL PROTEIN S15A"/>
    <property type="match status" value="1"/>
</dbReference>
<dbReference type="Pfam" id="PF00410">
    <property type="entry name" value="Ribosomal_S8"/>
    <property type="match status" value="1"/>
</dbReference>
<dbReference type="SUPFAM" id="SSF56047">
    <property type="entry name" value="Ribosomal protein S8"/>
    <property type="match status" value="1"/>
</dbReference>